<accession>P36571</accession>
<name>BIOC_SERMA</name>
<feature type="chain" id="PRO_0000204419" description="Malonyl-[acyl-carrier protein] O-methyltransferase">
    <location>
        <begin position="1"/>
        <end position="255"/>
    </location>
</feature>
<organism>
    <name type="scientific">Serratia marcescens</name>
    <dbReference type="NCBI Taxonomy" id="615"/>
    <lineage>
        <taxon>Bacteria</taxon>
        <taxon>Pseudomonadati</taxon>
        <taxon>Pseudomonadota</taxon>
        <taxon>Gammaproteobacteria</taxon>
        <taxon>Enterobacterales</taxon>
        <taxon>Yersiniaceae</taxon>
        <taxon>Serratia</taxon>
    </lineage>
</organism>
<dbReference type="EC" id="2.1.1.197" evidence="1"/>
<dbReference type="EMBL" id="D17468">
    <property type="protein sequence ID" value="BAA04287.1"/>
    <property type="molecule type" value="Genomic_DNA"/>
</dbReference>
<dbReference type="SMR" id="P36571"/>
<dbReference type="STRING" id="273526.SMDB11_0562"/>
<dbReference type="UniPathway" id="UPA00078"/>
<dbReference type="GO" id="GO:0010340">
    <property type="term" value="F:carboxyl-O-methyltransferase activity"/>
    <property type="evidence" value="ECO:0007669"/>
    <property type="project" value="UniProtKB-UniRule"/>
</dbReference>
<dbReference type="GO" id="GO:0102130">
    <property type="term" value="F:malonyl-CoA methyltransferase activity"/>
    <property type="evidence" value="ECO:0007669"/>
    <property type="project" value="UniProtKB-EC"/>
</dbReference>
<dbReference type="GO" id="GO:0008757">
    <property type="term" value="F:S-adenosylmethionine-dependent methyltransferase activity"/>
    <property type="evidence" value="ECO:0007669"/>
    <property type="project" value="InterPro"/>
</dbReference>
<dbReference type="GO" id="GO:0009102">
    <property type="term" value="P:biotin biosynthetic process"/>
    <property type="evidence" value="ECO:0007669"/>
    <property type="project" value="UniProtKB-UniRule"/>
</dbReference>
<dbReference type="GO" id="GO:0032259">
    <property type="term" value="P:methylation"/>
    <property type="evidence" value="ECO:0007669"/>
    <property type="project" value="UniProtKB-KW"/>
</dbReference>
<dbReference type="CDD" id="cd02440">
    <property type="entry name" value="AdoMet_MTases"/>
    <property type="match status" value="1"/>
</dbReference>
<dbReference type="Gene3D" id="3.40.50.150">
    <property type="entry name" value="Vaccinia Virus protein VP39"/>
    <property type="match status" value="1"/>
</dbReference>
<dbReference type="HAMAP" id="MF_00835">
    <property type="entry name" value="BioC"/>
    <property type="match status" value="1"/>
</dbReference>
<dbReference type="InterPro" id="IPR011814">
    <property type="entry name" value="BioC"/>
</dbReference>
<dbReference type="InterPro" id="IPR013216">
    <property type="entry name" value="Methyltransf_11"/>
</dbReference>
<dbReference type="InterPro" id="IPR029063">
    <property type="entry name" value="SAM-dependent_MTases_sf"/>
</dbReference>
<dbReference type="NCBIfam" id="TIGR02072">
    <property type="entry name" value="BioC"/>
    <property type="match status" value="1"/>
</dbReference>
<dbReference type="PANTHER" id="PTHR43591">
    <property type="entry name" value="METHYLTRANSFERASE"/>
    <property type="match status" value="1"/>
</dbReference>
<dbReference type="Pfam" id="PF08241">
    <property type="entry name" value="Methyltransf_11"/>
    <property type="match status" value="1"/>
</dbReference>
<dbReference type="SUPFAM" id="SSF53335">
    <property type="entry name" value="S-adenosyl-L-methionine-dependent methyltransferases"/>
    <property type="match status" value="1"/>
</dbReference>
<reference key="1">
    <citation type="journal article" date="1993" name="Appl. Environ. Microbiol.">
        <title>Molecular breeding of a biotin-hyperproducing Serratia marcescens strain.</title>
        <authorList>
            <person name="Sakurai N."/>
            <person name="Imai Y."/>
            <person name="Masuda M."/>
            <person name="Komatsubara S."/>
            <person name="Tosa T."/>
        </authorList>
    </citation>
    <scope>NUCLEOTIDE SEQUENCE [GENOMIC DNA]</scope>
    <scope>FUNCTION IN THE BIOTIN BIOSYNTHESIS</scope>
    <source>
        <strain>Sr41</strain>
    </source>
</reference>
<sequence length="255" mass="27777">MTSANDTVNKQAVASAFSRAAGSYDAAAALQRDVGERLLGMGSSHPGEQLLDAGCGTGYFSRMWRERGKRVTALDLAPGMLDVARQRQAAHHYLLGDIEQVPLPDAAMDICFSSLVVQWCSDLPAALAELYRVTRPGGVILFSTLAAGSLQELGDAWQQVDGERHVNAFLPLTQIRTACAAYRHELVTELRTLNYPDVMTLMRSLKGIGATHLHQGREGGLMSRGRLAALQAAYPCRQGQFPLSYHLAYGVIYRE</sequence>
<comment type="function">
    <text evidence="1 2">Converts the free carboxyl group of a malonyl-thioester to its methyl ester by transfer of a methyl group from S-adenosyl-L-methionine (SAM). It allows to synthesize pimeloyl-ACP via the fatty acid synthetic pathway.</text>
</comment>
<comment type="catalytic activity">
    <reaction evidence="1">
        <text>malonyl-[ACP] + S-adenosyl-L-methionine = malonyl-[ACP] methyl ester + S-adenosyl-L-homocysteine</text>
        <dbReference type="Rhea" id="RHEA:17105"/>
        <dbReference type="Rhea" id="RHEA-COMP:9623"/>
        <dbReference type="Rhea" id="RHEA-COMP:9954"/>
        <dbReference type="ChEBI" id="CHEBI:57856"/>
        <dbReference type="ChEBI" id="CHEBI:59789"/>
        <dbReference type="ChEBI" id="CHEBI:78449"/>
        <dbReference type="ChEBI" id="CHEBI:78845"/>
        <dbReference type="EC" id="2.1.1.197"/>
    </reaction>
</comment>
<comment type="pathway">
    <text evidence="1">Cofactor biosynthesis; biotin biosynthesis.</text>
</comment>
<comment type="similarity">
    <text evidence="1">Belongs to the methyltransferase superfamily.</text>
</comment>
<gene>
    <name evidence="1" type="primary">bioC</name>
</gene>
<protein>
    <recommendedName>
        <fullName evidence="1">Malonyl-[acyl-carrier protein] O-methyltransferase</fullName>
        <shortName evidence="1">Malonyl-ACP O-methyltransferase</shortName>
        <ecNumber evidence="1">2.1.1.197</ecNumber>
    </recommendedName>
    <alternativeName>
        <fullName evidence="1">Biotin synthesis protein BioC</fullName>
    </alternativeName>
</protein>
<evidence type="ECO:0000255" key="1">
    <source>
        <dbReference type="HAMAP-Rule" id="MF_00835"/>
    </source>
</evidence>
<evidence type="ECO:0000269" key="2">
    <source>
    </source>
</evidence>
<keyword id="KW-0093">Biotin biosynthesis</keyword>
<keyword id="KW-0489">Methyltransferase</keyword>
<keyword id="KW-0949">S-adenosyl-L-methionine</keyword>
<keyword id="KW-0808">Transferase</keyword>
<proteinExistence type="evidence at protein level"/>